<evidence type="ECO:0000305" key="1"/>
<organism>
    <name type="scientific">Escherichia coli (strain K12)</name>
    <dbReference type="NCBI Taxonomy" id="83333"/>
    <lineage>
        <taxon>Bacteria</taxon>
        <taxon>Pseudomonadati</taxon>
        <taxon>Pseudomonadota</taxon>
        <taxon>Gammaproteobacteria</taxon>
        <taxon>Enterobacterales</taxon>
        <taxon>Enterobacteriaceae</taxon>
        <taxon>Escherichia</taxon>
    </lineage>
</organism>
<feature type="chain" id="PRO_0000180849" description="Flagellar basal-body rod protein FlgG">
    <location>
        <begin position="1"/>
        <end position="260"/>
    </location>
</feature>
<name>FLGG_ECOLI</name>
<gene>
    <name type="primary">flgG</name>
    <name type="synonym">fla FVII</name>
    <name type="synonym">flaL</name>
    <name type="ordered locus">b1078</name>
    <name type="ordered locus">JW1065</name>
</gene>
<protein>
    <recommendedName>
        <fullName>Flagellar basal-body rod protein FlgG</fullName>
    </recommendedName>
    <alternativeName>
        <fullName>Distal rod protein</fullName>
    </alternativeName>
</protein>
<comment type="subunit">
    <text>The basal body constitutes a major portion of the flagellar organelle and consists of four rings (L,P,S, and M) mounted on a central rod. The rod consists of about 26 subunits of FlgG in the distal portion, and FlgB, FlgC and FlgF are thought to build up the proximal portion of the rod with about 6 subunits each.</text>
</comment>
<comment type="subcellular location">
    <subcellularLocation>
        <location>Bacterial flagellum basal body</location>
    </subcellularLocation>
</comment>
<comment type="similarity">
    <text evidence="1">Belongs to the flagella basal body rod proteins family.</text>
</comment>
<keyword id="KW-0975">Bacterial flagellum</keyword>
<keyword id="KW-1185">Reference proteome</keyword>
<reference key="1">
    <citation type="journal article" date="1996" name="DNA Res.">
        <title>A 718-kb DNA sequence of the Escherichia coli K-12 genome corresponding to the 12.7-28.0 min region on the linkage map.</title>
        <authorList>
            <person name="Oshima T."/>
            <person name="Aiba H."/>
            <person name="Baba T."/>
            <person name="Fujita K."/>
            <person name="Hayashi K."/>
            <person name="Honjo A."/>
            <person name="Ikemoto K."/>
            <person name="Inada T."/>
            <person name="Itoh T."/>
            <person name="Kajihara M."/>
            <person name="Kanai K."/>
            <person name="Kashimoto K."/>
            <person name="Kimura S."/>
            <person name="Kitagawa M."/>
            <person name="Makino K."/>
            <person name="Masuda S."/>
            <person name="Miki T."/>
            <person name="Mizobuchi K."/>
            <person name="Mori H."/>
            <person name="Motomura K."/>
            <person name="Nakamura Y."/>
            <person name="Nashimoto H."/>
            <person name="Nishio Y."/>
            <person name="Saito N."/>
            <person name="Sampei G."/>
            <person name="Seki Y."/>
            <person name="Tagami H."/>
            <person name="Takemoto K."/>
            <person name="Wada C."/>
            <person name="Yamamoto Y."/>
            <person name="Yano M."/>
            <person name="Horiuchi T."/>
        </authorList>
    </citation>
    <scope>NUCLEOTIDE SEQUENCE [LARGE SCALE GENOMIC DNA]</scope>
    <source>
        <strain>K12 / W3110 / ATCC 27325 / DSM 5911</strain>
    </source>
</reference>
<reference key="2">
    <citation type="journal article" date="1997" name="Science">
        <title>The complete genome sequence of Escherichia coli K-12.</title>
        <authorList>
            <person name="Blattner F.R."/>
            <person name="Plunkett G. III"/>
            <person name="Bloch C.A."/>
            <person name="Perna N.T."/>
            <person name="Burland V."/>
            <person name="Riley M."/>
            <person name="Collado-Vides J."/>
            <person name="Glasner J.D."/>
            <person name="Rode C.K."/>
            <person name="Mayhew G.F."/>
            <person name="Gregor J."/>
            <person name="Davis N.W."/>
            <person name="Kirkpatrick H.A."/>
            <person name="Goeden M.A."/>
            <person name="Rose D.J."/>
            <person name="Mau B."/>
            <person name="Shao Y."/>
        </authorList>
    </citation>
    <scope>NUCLEOTIDE SEQUENCE [LARGE SCALE GENOMIC DNA]</scope>
    <source>
        <strain>K12 / MG1655 / ATCC 47076</strain>
    </source>
</reference>
<reference key="3">
    <citation type="journal article" date="2006" name="Mol. Syst. Biol.">
        <title>Highly accurate genome sequences of Escherichia coli K-12 strains MG1655 and W3110.</title>
        <authorList>
            <person name="Hayashi K."/>
            <person name="Morooka N."/>
            <person name="Yamamoto Y."/>
            <person name="Fujita K."/>
            <person name="Isono K."/>
            <person name="Choi S."/>
            <person name="Ohtsubo E."/>
            <person name="Baba T."/>
            <person name="Wanner B.L."/>
            <person name="Mori H."/>
            <person name="Horiuchi T."/>
        </authorList>
    </citation>
    <scope>NUCLEOTIDE SEQUENCE [LARGE SCALE GENOMIC DNA]</scope>
    <source>
        <strain>K12 / W3110 / ATCC 27325 / DSM 5911</strain>
    </source>
</reference>
<proteinExistence type="inferred from homology"/>
<accession>P0ABX5</accession>
<accession>P75939</accession>
<sequence>MISSLWIAKTGLDAQQTNMDVIANNLANVSTNGFKRQRAVFEDLLYQTIRQPGAQSSEQTTLPSGLQIGTGVRPVATERLHSQGNLSQTNNSKDVAIKGQGFFQVMLPDGSSAYTRDGSFQVDQNGQLVTAGGFQVQPAITIPANALSITIGRDGVVSVTQQGQAAPVQVGQLNLTTFMNDTGLESIGENLYTETQSSGAPNESTPGLNGAGLLYQGYVETSNVNVAEELVNMIQVQRAYEINSKAVSTTDQMLQKLTQL</sequence>
<dbReference type="EMBL" id="U00096">
    <property type="protein sequence ID" value="AAC74162.1"/>
    <property type="molecule type" value="Genomic_DNA"/>
</dbReference>
<dbReference type="EMBL" id="AP009048">
    <property type="protein sequence ID" value="BAA35887.1"/>
    <property type="molecule type" value="Genomic_DNA"/>
</dbReference>
<dbReference type="PIR" id="C64851">
    <property type="entry name" value="C64851"/>
</dbReference>
<dbReference type="RefSeq" id="NP_415596.1">
    <property type="nucleotide sequence ID" value="NC_000913.3"/>
</dbReference>
<dbReference type="RefSeq" id="WP_000625837.1">
    <property type="nucleotide sequence ID" value="NZ_STEB01000016.1"/>
</dbReference>
<dbReference type="SMR" id="P0ABX5"/>
<dbReference type="BioGRID" id="4261898">
    <property type="interactions" value="20"/>
</dbReference>
<dbReference type="ComplexPortal" id="CPX-5887">
    <property type="entry name" value="Flagellar basal-body rod complex"/>
</dbReference>
<dbReference type="FunCoup" id="P0ABX5">
    <property type="interactions" value="132"/>
</dbReference>
<dbReference type="IntAct" id="P0ABX5">
    <property type="interactions" value="8"/>
</dbReference>
<dbReference type="STRING" id="511145.b1078"/>
<dbReference type="PaxDb" id="511145-b1078"/>
<dbReference type="EnsemblBacteria" id="AAC74162">
    <property type="protein sequence ID" value="AAC74162"/>
    <property type="gene ID" value="b1078"/>
</dbReference>
<dbReference type="GeneID" id="86863573"/>
<dbReference type="GeneID" id="945647"/>
<dbReference type="KEGG" id="ecj:JW1065"/>
<dbReference type="KEGG" id="eco:b1078"/>
<dbReference type="KEGG" id="ecoc:C3026_06535"/>
<dbReference type="PATRIC" id="fig|1411691.4.peg.1190"/>
<dbReference type="EchoBASE" id="EB4019"/>
<dbReference type="eggNOG" id="COG4786">
    <property type="taxonomic scope" value="Bacteria"/>
</dbReference>
<dbReference type="HOGENOM" id="CLU_013687_0_1_6"/>
<dbReference type="InParanoid" id="P0ABX5"/>
<dbReference type="OMA" id="MIRSLWT"/>
<dbReference type="OrthoDB" id="9804559at2"/>
<dbReference type="PhylomeDB" id="P0ABX5"/>
<dbReference type="BioCyc" id="EcoCyc:FLGG-FLAGELLAR-MOTOR-ROD-PROTEIN"/>
<dbReference type="PRO" id="PR:P0ABX5"/>
<dbReference type="Proteomes" id="UP000000625">
    <property type="component" value="Chromosome"/>
</dbReference>
<dbReference type="GO" id="GO:0009288">
    <property type="term" value="C:bacterial-type flagellum"/>
    <property type="evidence" value="ECO:0000315"/>
    <property type="project" value="EcoCyc"/>
</dbReference>
<dbReference type="GO" id="GO:0009426">
    <property type="term" value="C:bacterial-type flagellum basal body, distal rod"/>
    <property type="evidence" value="ECO:0000304"/>
    <property type="project" value="EcoCyc"/>
</dbReference>
<dbReference type="GO" id="GO:0030694">
    <property type="term" value="C:bacterial-type flagellum basal body, rod"/>
    <property type="evidence" value="ECO:0000303"/>
    <property type="project" value="ComplexPortal"/>
</dbReference>
<dbReference type="GO" id="GO:0009279">
    <property type="term" value="C:cell outer membrane"/>
    <property type="evidence" value="ECO:0000314"/>
    <property type="project" value="EcoCyc"/>
</dbReference>
<dbReference type="GO" id="GO:0071973">
    <property type="term" value="P:bacterial-type flagellum-dependent cell motility"/>
    <property type="evidence" value="ECO:0000315"/>
    <property type="project" value="EcoCyc"/>
</dbReference>
<dbReference type="GO" id="GO:0071978">
    <property type="term" value="P:bacterial-type flagellum-dependent swarming motility"/>
    <property type="evidence" value="ECO:0000318"/>
    <property type="project" value="GO_Central"/>
</dbReference>
<dbReference type="GO" id="GO:0006935">
    <property type="term" value="P:chemotaxis"/>
    <property type="evidence" value="ECO:0000303"/>
    <property type="project" value="ComplexPortal"/>
</dbReference>
<dbReference type="InterPro" id="IPR001444">
    <property type="entry name" value="Flag_bb_rod_N"/>
</dbReference>
<dbReference type="InterPro" id="IPR019776">
    <property type="entry name" value="Flagellar_basal_body_rod_CS"/>
</dbReference>
<dbReference type="InterPro" id="IPR020013">
    <property type="entry name" value="Flagellar_FlgE/F/G"/>
</dbReference>
<dbReference type="InterPro" id="IPR010930">
    <property type="entry name" value="Flg_bb/hook_C_dom"/>
</dbReference>
<dbReference type="InterPro" id="IPR037925">
    <property type="entry name" value="FlgE/F/G-like"/>
</dbReference>
<dbReference type="InterPro" id="IPR012834">
    <property type="entry name" value="FlgG_G_neg"/>
</dbReference>
<dbReference type="InterPro" id="IPR053967">
    <property type="entry name" value="LlgE_F_G-like_D1"/>
</dbReference>
<dbReference type="NCBIfam" id="TIGR03506">
    <property type="entry name" value="FlgEFG_subfam"/>
    <property type="match status" value="2"/>
</dbReference>
<dbReference type="NCBIfam" id="TIGR02488">
    <property type="entry name" value="flgG_G_neg"/>
    <property type="match status" value="1"/>
</dbReference>
<dbReference type="PANTHER" id="PTHR30435:SF19">
    <property type="entry name" value="FLAGELLAR BASAL-BODY ROD PROTEIN FLGG"/>
    <property type="match status" value="1"/>
</dbReference>
<dbReference type="PANTHER" id="PTHR30435">
    <property type="entry name" value="FLAGELLAR PROTEIN"/>
    <property type="match status" value="1"/>
</dbReference>
<dbReference type="Pfam" id="PF00460">
    <property type="entry name" value="Flg_bb_rod"/>
    <property type="match status" value="1"/>
</dbReference>
<dbReference type="Pfam" id="PF06429">
    <property type="entry name" value="Flg_bbr_C"/>
    <property type="match status" value="1"/>
</dbReference>
<dbReference type="Pfam" id="PF22692">
    <property type="entry name" value="LlgE_F_G_D1"/>
    <property type="match status" value="1"/>
</dbReference>
<dbReference type="SUPFAM" id="SSF117143">
    <property type="entry name" value="Flagellar hook protein flgE"/>
    <property type="match status" value="1"/>
</dbReference>
<dbReference type="PROSITE" id="PS00588">
    <property type="entry name" value="FLAGELLA_BB_ROD"/>
    <property type="match status" value="1"/>
</dbReference>